<proteinExistence type="inferred from homology"/>
<protein>
    <recommendedName>
        <fullName evidence="2">Small ribosomal subunit protein uS5c</fullName>
    </recommendedName>
    <alternativeName>
        <fullName>30S ribosomal protein S5, chloroplastic</fullName>
    </alternativeName>
</protein>
<name>RR5_THAPS</name>
<sequence>MSTEFNQVNKLKKTPRRNDNLNEAKFVERLIKISRVTKVTKGGKKLSFRAVVVIGDENGKVGVGVGKAEDVVNAFKKAKTDGRKNLIDVPITKSLSIPHAVIGDLGACKIIMRPSIEGSGVIAGGAVRTVLEVAGIKNVIAKQLGSDNLLNNARTAIVALESLTTLDEVKRKRYHKSVL</sequence>
<gene>
    <name type="primary">rps5</name>
</gene>
<comment type="function">
    <text evidence="1">With S4 and S12 plays an important role in translational accuracy.</text>
</comment>
<comment type="subunit">
    <text evidence="1">Part of the 30S ribosomal subunit. Contacts protein S4 (By similarity).</text>
</comment>
<comment type="subcellular location">
    <subcellularLocation>
        <location>Plastid</location>
        <location>Chloroplast</location>
    </subcellularLocation>
</comment>
<comment type="domain">
    <text>The N-terminal domain interacts with the head of the 30S subunit; the C-terminal domain interacts with the body and contacts protein S4. The interaction surface between S4 and S5 is involved in control of translational fidelity.</text>
</comment>
<comment type="similarity">
    <text evidence="2">Belongs to the universal ribosomal protein uS5 family.</text>
</comment>
<geneLocation type="chloroplast"/>
<evidence type="ECO:0000250" key="1"/>
<evidence type="ECO:0000305" key="2"/>
<feature type="chain" id="PRO_0000277028" description="Small ribosomal subunit protein uS5c">
    <location>
        <begin position="1"/>
        <end position="179"/>
    </location>
</feature>
<feature type="domain" description="S5 DRBM">
    <location>
        <begin position="26"/>
        <end position="89"/>
    </location>
</feature>
<keyword id="KW-0150">Chloroplast</keyword>
<keyword id="KW-0934">Plastid</keyword>
<keyword id="KW-0687">Ribonucleoprotein</keyword>
<keyword id="KW-0689">Ribosomal protein</keyword>
<keyword id="KW-0694">RNA-binding</keyword>
<keyword id="KW-0699">rRNA-binding</keyword>
<organism>
    <name type="scientific">Thalassiosira pseudonana</name>
    <name type="common">Marine diatom</name>
    <name type="synonym">Cyclotella nana</name>
    <dbReference type="NCBI Taxonomy" id="35128"/>
    <lineage>
        <taxon>Eukaryota</taxon>
        <taxon>Sar</taxon>
        <taxon>Stramenopiles</taxon>
        <taxon>Ochrophyta</taxon>
        <taxon>Bacillariophyta</taxon>
        <taxon>Coscinodiscophyceae</taxon>
        <taxon>Thalassiosirophycidae</taxon>
        <taxon>Thalassiosirales</taxon>
        <taxon>Thalassiosiraceae</taxon>
        <taxon>Thalassiosira</taxon>
    </lineage>
</organism>
<dbReference type="EMBL" id="EF067921">
    <property type="protein sequence ID" value="ABK20824.1"/>
    <property type="molecule type" value="Genomic_DNA"/>
</dbReference>
<dbReference type="RefSeq" id="YP_874601.1">
    <property type="nucleotide sequence ID" value="NC_008589.1"/>
</dbReference>
<dbReference type="SMR" id="A0T0Y9"/>
<dbReference type="STRING" id="35128.A0T0Y9"/>
<dbReference type="GeneID" id="4524764"/>
<dbReference type="InParanoid" id="A0T0Y9"/>
<dbReference type="GO" id="GO:0009507">
    <property type="term" value="C:chloroplast"/>
    <property type="evidence" value="ECO:0007669"/>
    <property type="project" value="UniProtKB-SubCell"/>
</dbReference>
<dbReference type="GO" id="GO:0005763">
    <property type="term" value="C:mitochondrial small ribosomal subunit"/>
    <property type="evidence" value="ECO:0000318"/>
    <property type="project" value="GO_Central"/>
</dbReference>
<dbReference type="GO" id="GO:0019843">
    <property type="term" value="F:rRNA binding"/>
    <property type="evidence" value="ECO:0007669"/>
    <property type="project" value="UniProtKB-UniRule"/>
</dbReference>
<dbReference type="GO" id="GO:0003735">
    <property type="term" value="F:structural constituent of ribosome"/>
    <property type="evidence" value="ECO:0000318"/>
    <property type="project" value="GO_Central"/>
</dbReference>
<dbReference type="GO" id="GO:0006412">
    <property type="term" value="P:translation"/>
    <property type="evidence" value="ECO:0000318"/>
    <property type="project" value="GO_Central"/>
</dbReference>
<dbReference type="FunFam" id="3.30.230.10:FF:000002">
    <property type="entry name" value="30S ribosomal protein S5"/>
    <property type="match status" value="1"/>
</dbReference>
<dbReference type="Gene3D" id="3.30.160.20">
    <property type="match status" value="1"/>
</dbReference>
<dbReference type="Gene3D" id="3.30.230.10">
    <property type="match status" value="1"/>
</dbReference>
<dbReference type="HAMAP" id="MF_01307_B">
    <property type="entry name" value="Ribosomal_uS5_B"/>
    <property type="match status" value="1"/>
</dbReference>
<dbReference type="InterPro" id="IPR020568">
    <property type="entry name" value="Ribosomal_Su5_D2-typ_SF"/>
</dbReference>
<dbReference type="InterPro" id="IPR000851">
    <property type="entry name" value="Ribosomal_uS5"/>
</dbReference>
<dbReference type="InterPro" id="IPR005712">
    <property type="entry name" value="Ribosomal_uS5_bac-type"/>
</dbReference>
<dbReference type="InterPro" id="IPR005324">
    <property type="entry name" value="Ribosomal_uS5_C"/>
</dbReference>
<dbReference type="InterPro" id="IPR013810">
    <property type="entry name" value="Ribosomal_uS5_N"/>
</dbReference>
<dbReference type="InterPro" id="IPR018192">
    <property type="entry name" value="Ribosomal_uS5_N_CS"/>
</dbReference>
<dbReference type="InterPro" id="IPR014721">
    <property type="entry name" value="Ribsml_uS5_D2-typ_fold_subgr"/>
</dbReference>
<dbReference type="NCBIfam" id="TIGR01021">
    <property type="entry name" value="rpsE_bact"/>
    <property type="match status" value="1"/>
</dbReference>
<dbReference type="PANTHER" id="PTHR48277">
    <property type="entry name" value="MITOCHONDRIAL RIBOSOMAL PROTEIN S5"/>
    <property type="match status" value="1"/>
</dbReference>
<dbReference type="PANTHER" id="PTHR48277:SF1">
    <property type="entry name" value="MITOCHONDRIAL RIBOSOMAL PROTEIN S5"/>
    <property type="match status" value="1"/>
</dbReference>
<dbReference type="Pfam" id="PF00333">
    <property type="entry name" value="Ribosomal_S5"/>
    <property type="match status" value="1"/>
</dbReference>
<dbReference type="Pfam" id="PF03719">
    <property type="entry name" value="Ribosomal_S5_C"/>
    <property type="match status" value="1"/>
</dbReference>
<dbReference type="SUPFAM" id="SSF54768">
    <property type="entry name" value="dsRNA-binding domain-like"/>
    <property type="match status" value="1"/>
</dbReference>
<dbReference type="SUPFAM" id="SSF54211">
    <property type="entry name" value="Ribosomal protein S5 domain 2-like"/>
    <property type="match status" value="1"/>
</dbReference>
<dbReference type="PROSITE" id="PS00585">
    <property type="entry name" value="RIBOSOMAL_S5"/>
    <property type="match status" value="1"/>
</dbReference>
<dbReference type="PROSITE" id="PS50881">
    <property type="entry name" value="S5_DSRBD"/>
    <property type="match status" value="1"/>
</dbReference>
<accession>A0T0Y9</accession>
<reference key="1">
    <citation type="journal article" date="2007" name="Mol. Genet. Genomics">
        <title>Chloroplast genomes of the diatoms Phaeodactylum tricornutum and Thalassiosira pseudonana: comparison with other plastid genomes of the red lineage.</title>
        <authorList>
            <person name="Oudot-Le Secq M.-P."/>
            <person name="Grimwood J."/>
            <person name="Shapiro H."/>
            <person name="Armbrust E.V."/>
            <person name="Bowler C."/>
            <person name="Green B.R."/>
        </authorList>
    </citation>
    <scope>NUCLEOTIDE SEQUENCE [LARGE SCALE GENOMIC DNA]</scope>
    <source>
        <strain>CCMP1335 / NEPCC58 / CCAP 1085/12</strain>
    </source>
</reference>